<feature type="chain" id="PRO_0000190411" description="Recombination protein RecR">
    <location>
        <begin position="1"/>
        <end position="232"/>
    </location>
</feature>
<feature type="domain" description="Toprim" evidence="1">
    <location>
        <begin position="115"/>
        <end position="209"/>
    </location>
</feature>
<feature type="zinc finger region" description="C4-type" evidence="1">
    <location>
        <begin position="92"/>
        <end position="107"/>
    </location>
</feature>
<organism>
    <name type="scientific">Synechocystis sp. (strain ATCC 27184 / PCC 6803 / Kazusa)</name>
    <dbReference type="NCBI Taxonomy" id="1111708"/>
    <lineage>
        <taxon>Bacteria</taxon>
        <taxon>Bacillati</taxon>
        <taxon>Cyanobacteriota</taxon>
        <taxon>Cyanophyceae</taxon>
        <taxon>Synechococcales</taxon>
        <taxon>Merismopediaceae</taxon>
        <taxon>Synechocystis</taxon>
    </lineage>
</organism>
<keyword id="KW-0227">DNA damage</keyword>
<keyword id="KW-0233">DNA recombination</keyword>
<keyword id="KW-0234">DNA repair</keyword>
<keyword id="KW-0479">Metal-binding</keyword>
<keyword id="KW-1185">Reference proteome</keyword>
<keyword id="KW-0862">Zinc</keyword>
<keyword id="KW-0863">Zinc-finger</keyword>
<accession>P74533</accession>
<name>RECR_SYNY3</name>
<gene>
    <name evidence="1" type="primary">recR</name>
    <name type="ordered locus">slr1426</name>
</gene>
<reference key="1">
    <citation type="journal article" date="1996" name="DNA Res.">
        <title>Sequence analysis of the genome of the unicellular cyanobacterium Synechocystis sp. strain PCC6803. II. Sequence determination of the entire genome and assignment of potential protein-coding regions.</title>
        <authorList>
            <person name="Kaneko T."/>
            <person name="Sato S."/>
            <person name="Kotani H."/>
            <person name="Tanaka A."/>
            <person name="Asamizu E."/>
            <person name="Nakamura Y."/>
            <person name="Miyajima N."/>
            <person name="Hirosawa M."/>
            <person name="Sugiura M."/>
            <person name="Sasamoto S."/>
            <person name="Kimura T."/>
            <person name="Hosouchi T."/>
            <person name="Matsuno A."/>
            <person name="Muraki A."/>
            <person name="Nakazaki N."/>
            <person name="Naruo K."/>
            <person name="Okumura S."/>
            <person name="Shimpo S."/>
            <person name="Takeuchi C."/>
            <person name="Wada T."/>
            <person name="Watanabe A."/>
            <person name="Yamada M."/>
            <person name="Yasuda M."/>
            <person name="Tabata S."/>
        </authorList>
    </citation>
    <scope>NUCLEOTIDE SEQUENCE [LARGE SCALE GENOMIC DNA]</scope>
    <source>
        <strain>ATCC 27184 / PCC 6803 / Kazusa</strain>
    </source>
</reference>
<evidence type="ECO:0000255" key="1">
    <source>
        <dbReference type="HAMAP-Rule" id="MF_00017"/>
    </source>
</evidence>
<protein>
    <recommendedName>
        <fullName evidence="1">Recombination protein RecR</fullName>
    </recommendedName>
</protein>
<proteinExistence type="inferred from homology"/>
<sequence length="232" mass="25504">MGKVAVNSPAHRPLVSTAVYLAPSVKFPLQKRGLGTIYTPPLARLIEQLQRLPSVGPKTAQRLALHLLKRPDAEVENLAQALLDAKKRVGQCQVCFHLSAEPVCDICRHPQRDNSVICVVSDPRDVIALEKTREFRGKYHVLGGVISPMDGIGPEQLTIQPLLHRVSQPEIKEVILAISPSVEGETTTLYLGKLLQPFTKVTRIAFGLPMGGDLEYADEVTLARALEGRREL</sequence>
<comment type="function">
    <text evidence="1">May play a role in DNA repair. It seems to be involved in an RecBC-independent recombinational process of DNA repair. It may act with RecF and RecO.</text>
</comment>
<comment type="similarity">
    <text evidence="1">Belongs to the RecR family.</text>
</comment>
<dbReference type="EMBL" id="BA000022">
    <property type="protein sequence ID" value="BAA18639.1"/>
    <property type="molecule type" value="Genomic_DNA"/>
</dbReference>
<dbReference type="PIR" id="S76727">
    <property type="entry name" value="S76727"/>
</dbReference>
<dbReference type="SMR" id="P74533"/>
<dbReference type="FunCoup" id="P74533">
    <property type="interactions" value="265"/>
</dbReference>
<dbReference type="STRING" id="1148.gene:10500404"/>
<dbReference type="PaxDb" id="1148-1653728"/>
<dbReference type="EnsemblBacteria" id="BAA18639">
    <property type="protein sequence ID" value="BAA18639"/>
    <property type="gene ID" value="BAA18639"/>
</dbReference>
<dbReference type="KEGG" id="syn:slr1426"/>
<dbReference type="eggNOG" id="COG0353">
    <property type="taxonomic scope" value="Bacteria"/>
</dbReference>
<dbReference type="InParanoid" id="P74533"/>
<dbReference type="PhylomeDB" id="P74533"/>
<dbReference type="Proteomes" id="UP000001425">
    <property type="component" value="Chromosome"/>
</dbReference>
<dbReference type="GO" id="GO:0003677">
    <property type="term" value="F:DNA binding"/>
    <property type="evidence" value="ECO:0007669"/>
    <property type="project" value="UniProtKB-UniRule"/>
</dbReference>
<dbReference type="GO" id="GO:0008270">
    <property type="term" value="F:zinc ion binding"/>
    <property type="evidence" value="ECO:0007669"/>
    <property type="project" value="UniProtKB-KW"/>
</dbReference>
<dbReference type="GO" id="GO:0006302">
    <property type="term" value="P:double-strand break repair"/>
    <property type="evidence" value="ECO:0000318"/>
    <property type="project" value="GO_Central"/>
</dbReference>
<dbReference type="GO" id="GO:0000725">
    <property type="term" value="P:recombinational repair"/>
    <property type="evidence" value="ECO:0000318"/>
    <property type="project" value="GO_Central"/>
</dbReference>
<dbReference type="CDD" id="cd01025">
    <property type="entry name" value="TOPRIM_recR"/>
    <property type="match status" value="1"/>
</dbReference>
<dbReference type="Gene3D" id="3.40.1360.10">
    <property type="match status" value="1"/>
</dbReference>
<dbReference type="Gene3D" id="6.10.250.240">
    <property type="match status" value="1"/>
</dbReference>
<dbReference type="Gene3D" id="1.10.8.420">
    <property type="entry name" value="RecR Domain 1"/>
    <property type="match status" value="1"/>
</dbReference>
<dbReference type="HAMAP" id="MF_00017">
    <property type="entry name" value="RecR"/>
    <property type="match status" value="1"/>
</dbReference>
<dbReference type="InterPro" id="IPR000093">
    <property type="entry name" value="DNA_Rcmb_RecR"/>
</dbReference>
<dbReference type="InterPro" id="IPR023627">
    <property type="entry name" value="Rcmb_RecR"/>
</dbReference>
<dbReference type="InterPro" id="IPR015967">
    <property type="entry name" value="Rcmb_RecR_Znf"/>
</dbReference>
<dbReference type="InterPro" id="IPR006171">
    <property type="entry name" value="TOPRIM_dom"/>
</dbReference>
<dbReference type="InterPro" id="IPR034137">
    <property type="entry name" value="TOPRIM_RecR"/>
</dbReference>
<dbReference type="NCBIfam" id="TIGR00615">
    <property type="entry name" value="recR"/>
    <property type="match status" value="1"/>
</dbReference>
<dbReference type="PANTHER" id="PTHR30446">
    <property type="entry name" value="RECOMBINATION PROTEIN RECR"/>
    <property type="match status" value="1"/>
</dbReference>
<dbReference type="PANTHER" id="PTHR30446:SF0">
    <property type="entry name" value="RECOMBINATION PROTEIN RECR"/>
    <property type="match status" value="1"/>
</dbReference>
<dbReference type="Pfam" id="PF21175">
    <property type="entry name" value="RecR_C"/>
    <property type="match status" value="1"/>
</dbReference>
<dbReference type="Pfam" id="PF21176">
    <property type="entry name" value="RecR_HhH"/>
    <property type="match status" value="1"/>
</dbReference>
<dbReference type="Pfam" id="PF02132">
    <property type="entry name" value="RecR_ZnF"/>
    <property type="match status" value="1"/>
</dbReference>
<dbReference type="Pfam" id="PF13662">
    <property type="entry name" value="Toprim_4"/>
    <property type="match status" value="1"/>
</dbReference>
<dbReference type="SMART" id="SM00493">
    <property type="entry name" value="TOPRIM"/>
    <property type="match status" value="1"/>
</dbReference>
<dbReference type="SUPFAM" id="SSF111304">
    <property type="entry name" value="Recombination protein RecR"/>
    <property type="match status" value="1"/>
</dbReference>
<dbReference type="PROSITE" id="PS01300">
    <property type="entry name" value="RECR"/>
    <property type="match status" value="1"/>
</dbReference>
<dbReference type="PROSITE" id="PS50880">
    <property type="entry name" value="TOPRIM"/>
    <property type="match status" value="1"/>
</dbReference>